<reference key="1">
    <citation type="journal article" date="2003" name="Curr. Microbiol.">
        <title>Cloning and expression of pyrroloquinoline quinone (PQQ) genes from a phosphate-solubilizing bacterium Enterobacter intermedium.</title>
        <authorList>
            <person name="Kim C.H."/>
            <person name="Han S.H."/>
            <person name="Kim K.Y."/>
            <person name="Cho B.H."/>
            <person name="Kim Y.H."/>
            <person name="Koo B.S."/>
            <person name="Kim Y.C."/>
        </authorList>
    </citation>
    <scope>NUCLEOTIDE SEQUENCE [GENOMIC DNA]</scope>
</reference>
<gene>
    <name type="primary">pqqD</name>
</gene>
<protein>
    <recommendedName>
        <fullName>PqqA binding protein</fullName>
    </recommendedName>
    <alternativeName>
        <fullName>Coenzyme PQQ synthesis protein D</fullName>
    </alternativeName>
    <alternativeName>
        <fullName>Pyrroloquinoline quinone biosynthesis protein D</fullName>
    </alternativeName>
</protein>
<keyword id="KW-0884">PQQ biosynthesis</keyword>
<comment type="function">
    <text>Functions as a PqqA binding protein and presents PqqA to PqqE, in the pyrroloquinoline quinone (PQQ) biosynthetic pathway.</text>
</comment>
<comment type="pathway">
    <text>Cofactor biosynthesis; pyrroloquinoline quinone biosynthesis.</text>
</comment>
<comment type="subunit">
    <text>Monomer. Interacts with PqqE.</text>
</comment>
<comment type="similarity">
    <text evidence="1">Belongs to the PqqD family.</text>
</comment>
<feature type="chain" id="PRO_0000219961" description="PqqA binding protein">
    <location>
        <begin position="1"/>
        <end position="92"/>
    </location>
</feature>
<evidence type="ECO:0000305" key="1"/>
<name>PQQD_KLUIN</name>
<proteinExistence type="inferred from homology"/>
<organism>
    <name type="scientific">Kluyvera intermedia</name>
    <name type="common">Enterobacter intermedius</name>
    <dbReference type="NCBI Taxonomy" id="61648"/>
    <lineage>
        <taxon>Bacteria</taxon>
        <taxon>Pseudomonadati</taxon>
        <taxon>Pseudomonadota</taxon>
        <taxon>Gammaproteobacteria</taxon>
        <taxon>Enterobacterales</taxon>
        <taxon>Enterobacteriaceae</taxon>
        <taxon>Kluyvera</taxon>
    </lineage>
</organism>
<dbReference type="EMBL" id="AY216683">
    <property type="protein sequence ID" value="AAP34381.1"/>
    <property type="molecule type" value="Genomic_DNA"/>
</dbReference>
<dbReference type="SMR" id="P59725"/>
<dbReference type="UniPathway" id="UPA00539"/>
<dbReference type="GO" id="GO:0048038">
    <property type="term" value="F:quinone binding"/>
    <property type="evidence" value="ECO:0007669"/>
    <property type="project" value="InterPro"/>
</dbReference>
<dbReference type="GO" id="GO:0018189">
    <property type="term" value="P:pyrroloquinoline quinone biosynthetic process"/>
    <property type="evidence" value="ECO:0007669"/>
    <property type="project" value="UniProtKB-UniRule"/>
</dbReference>
<dbReference type="Gene3D" id="1.10.10.1150">
    <property type="entry name" value="Coenzyme PQQ synthesis protein D (PqqD)"/>
    <property type="match status" value="1"/>
</dbReference>
<dbReference type="HAMAP" id="MF_00655">
    <property type="entry name" value="PQQ_syn_PqqD"/>
    <property type="match status" value="1"/>
</dbReference>
<dbReference type="InterPro" id="IPR008792">
    <property type="entry name" value="PQQD"/>
</dbReference>
<dbReference type="InterPro" id="IPR022479">
    <property type="entry name" value="PqqD_bac"/>
</dbReference>
<dbReference type="InterPro" id="IPR041881">
    <property type="entry name" value="PqqD_sf"/>
</dbReference>
<dbReference type="NCBIfam" id="TIGR03859">
    <property type="entry name" value="PQQ_PqqD"/>
    <property type="match status" value="1"/>
</dbReference>
<dbReference type="NCBIfam" id="NF002535">
    <property type="entry name" value="PRK02079.1"/>
    <property type="match status" value="1"/>
</dbReference>
<dbReference type="Pfam" id="PF05402">
    <property type="entry name" value="PqqD"/>
    <property type="match status" value="1"/>
</dbReference>
<sequence length="92" mass="10262">MKDNVIPAFRRGYRMQWEAAQDSHVVLYPEGMAKLNETAVAILELVDGKQDVAAIVATLDARFPDAGGVGDDVKEFLQSAIEQKWIQCREPE</sequence>
<accession>P59725</accession>